<reference key="1">
    <citation type="submission" date="2008-10" db="EMBL/GenBank/DDBJ databases">
        <title>Genome sequence of Ureaplasma urealyticum serovar 10 ATCC-33699.</title>
        <authorList>
            <person name="Shrivastava S."/>
            <person name="Methe B.A."/>
            <person name="Glass J."/>
            <person name="White K."/>
            <person name="Duffy L.B."/>
        </authorList>
    </citation>
    <scope>NUCLEOTIDE SEQUENCE [LARGE SCALE GENOMIC DNA]</scope>
    <source>
        <strain>ATCC 33699 / Western</strain>
    </source>
</reference>
<proteinExistence type="inferred from homology"/>
<dbReference type="EMBL" id="CP001184">
    <property type="protein sequence ID" value="ACI59737.1"/>
    <property type="molecule type" value="Genomic_DNA"/>
</dbReference>
<dbReference type="RefSeq" id="WP_004026213.1">
    <property type="nucleotide sequence ID" value="NC_011374.1"/>
</dbReference>
<dbReference type="SMR" id="B5ZCB9"/>
<dbReference type="STRING" id="565575.UUR10_0709"/>
<dbReference type="GeneID" id="93849160"/>
<dbReference type="KEGG" id="uue:UUR10_0709"/>
<dbReference type="eggNOG" id="COG0230">
    <property type="taxonomic scope" value="Bacteria"/>
</dbReference>
<dbReference type="HOGENOM" id="CLU_129938_2_0_14"/>
<dbReference type="OrthoDB" id="9804164at2"/>
<dbReference type="Proteomes" id="UP000002018">
    <property type="component" value="Chromosome"/>
</dbReference>
<dbReference type="GO" id="GO:1990904">
    <property type="term" value="C:ribonucleoprotein complex"/>
    <property type="evidence" value="ECO:0007669"/>
    <property type="project" value="UniProtKB-KW"/>
</dbReference>
<dbReference type="GO" id="GO:0005840">
    <property type="term" value="C:ribosome"/>
    <property type="evidence" value="ECO:0007669"/>
    <property type="project" value="UniProtKB-KW"/>
</dbReference>
<dbReference type="GO" id="GO:0003735">
    <property type="term" value="F:structural constituent of ribosome"/>
    <property type="evidence" value="ECO:0007669"/>
    <property type="project" value="InterPro"/>
</dbReference>
<dbReference type="GO" id="GO:0006412">
    <property type="term" value="P:translation"/>
    <property type="evidence" value="ECO:0007669"/>
    <property type="project" value="UniProtKB-UniRule"/>
</dbReference>
<dbReference type="FunFam" id="1.10.287.3980:FF:000001">
    <property type="entry name" value="Mitochondrial ribosomal protein L34"/>
    <property type="match status" value="1"/>
</dbReference>
<dbReference type="Gene3D" id="1.10.287.3980">
    <property type="match status" value="1"/>
</dbReference>
<dbReference type="HAMAP" id="MF_00391">
    <property type="entry name" value="Ribosomal_bL34"/>
    <property type="match status" value="1"/>
</dbReference>
<dbReference type="InterPro" id="IPR000271">
    <property type="entry name" value="Ribosomal_bL34"/>
</dbReference>
<dbReference type="InterPro" id="IPR020939">
    <property type="entry name" value="Ribosomal_bL34_CS"/>
</dbReference>
<dbReference type="NCBIfam" id="TIGR01030">
    <property type="entry name" value="rpmH_bact"/>
    <property type="match status" value="1"/>
</dbReference>
<dbReference type="PANTHER" id="PTHR14503:SF4">
    <property type="entry name" value="LARGE RIBOSOMAL SUBUNIT PROTEIN BL34M"/>
    <property type="match status" value="1"/>
</dbReference>
<dbReference type="PANTHER" id="PTHR14503">
    <property type="entry name" value="MITOCHONDRIAL RIBOSOMAL PROTEIN 34 FAMILY MEMBER"/>
    <property type="match status" value="1"/>
</dbReference>
<dbReference type="Pfam" id="PF00468">
    <property type="entry name" value="Ribosomal_L34"/>
    <property type="match status" value="1"/>
</dbReference>
<dbReference type="PROSITE" id="PS00784">
    <property type="entry name" value="RIBOSOMAL_L34"/>
    <property type="match status" value="1"/>
</dbReference>
<sequence>MKRTFQPNNRKRAKVHGFRARMKTKNGRNVLARRRLKGRHSLTVSGEK</sequence>
<name>RL34_UREU1</name>
<accession>B5ZCB9</accession>
<gene>
    <name evidence="1" type="primary">rpmH</name>
    <name type="ordered locus">UUR10_0709</name>
</gene>
<organism>
    <name type="scientific">Ureaplasma urealyticum serovar 10 (strain ATCC 33699 / Western)</name>
    <dbReference type="NCBI Taxonomy" id="565575"/>
    <lineage>
        <taxon>Bacteria</taxon>
        <taxon>Bacillati</taxon>
        <taxon>Mycoplasmatota</taxon>
        <taxon>Mycoplasmoidales</taxon>
        <taxon>Mycoplasmoidaceae</taxon>
        <taxon>Ureaplasma</taxon>
    </lineage>
</organism>
<feature type="chain" id="PRO_1000196137" description="Large ribosomal subunit protein bL34">
    <location>
        <begin position="1"/>
        <end position="48"/>
    </location>
</feature>
<comment type="similarity">
    <text evidence="1">Belongs to the bacterial ribosomal protein bL34 family.</text>
</comment>
<evidence type="ECO:0000255" key="1">
    <source>
        <dbReference type="HAMAP-Rule" id="MF_00391"/>
    </source>
</evidence>
<evidence type="ECO:0000305" key="2"/>
<keyword id="KW-0687">Ribonucleoprotein</keyword>
<keyword id="KW-0689">Ribosomal protein</keyword>
<protein>
    <recommendedName>
        <fullName evidence="1">Large ribosomal subunit protein bL34</fullName>
    </recommendedName>
    <alternativeName>
        <fullName evidence="2">50S ribosomal protein L34</fullName>
    </alternativeName>
</protein>